<proteinExistence type="inferred from homology"/>
<protein>
    <recommendedName>
        <fullName>Dihydromonapterin reductase</fullName>
        <shortName>H(2)-MPt reductase</shortName>
        <ecNumber evidence="1">1.5.1.50</ecNumber>
    </recommendedName>
    <alternativeName>
        <fullName>Dihydrofolate reductase</fullName>
        <shortName>DHFR</shortName>
        <ecNumber evidence="1">1.5.1.3</ecNumber>
    </alternativeName>
</protein>
<organism>
    <name type="scientific">Shigella boydii serotype 4 (strain Sb227)</name>
    <dbReference type="NCBI Taxonomy" id="300268"/>
    <lineage>
        <taxon>Bacteria</taxon>
        <taxon>Pseudomonadati</taxon>
        <taxon>Pseudomonadota</taxon>
        <taxon>Gammaproteobacteria</taxon>
        <taxon>Enterobacterales</taxon>
        <taxon>Enterobacteriaceae</taxon>
        <taxon>Shigella</taxon>
    </lineage>
</organism>
<comment type="function">
    <text evidence="1">Catalyzes the reduction of dihydromonapterin to tetrahydromonapterin. Also has lower activity with dihydrofolate.</text>
</comment>
<comment type="catalytic activity">
    <reaction evidence="1">
        <text>(6S)-5,6,7,8-tetrahydrofolate + NADP(+) = 7,8-dihydrofolate + NADPH + H(+)</text>
        <dbReference type="Rhea" id="RHEA:15009"/>
        <dbReference type="ChEBI" id="CHEBI:15378"/>
        <dbReference type="ChEBI" id="CHEBI:57451"/>
        <dbReference type="ChEBI" id="CHEBI:57453"/>
        <dbReference type="ChEBI" id="CHEBI:57783"/>
        <dbReference type="ChEBI" id="CHEBI:58349"/>
        <dbReference type="EC" id="1.5.1.3"/>
    </reaction>
</comment>
<comment type="catalytic activity">
    <reaction evidence="1">
        <text>7,8-dihydromonapterin + NADPH + H(+) = 5,6,7,8-tetrahydromonapterin + NADP(+)</text>
        <dbReference type="Rhea" id="RHEA:34847"/>
        <dbReference type="ChEBI" id="CHEBI:15378"/>
        <dbReference type="ChEBI" id="CHEBI:57783"/>
        <dbReference type="ChEBI" id="CHEBI:58349"/>
        <dbReference type="ChEBI" id="CHEBI:71175"/>
        <dbReference type="ChEBI" id="CHEBI:71177"/>
        <dbReference type="EC" id="1.5.1.50"/>
    </reaction>
</comment>
<comment type="similarity">
    <text evidence="3">Belongs to the short-chain dehydrogenases/reductases (SDR) family. FolM subfamily.</text>
</comment>
<reference key="1">
    <citation type="journal article" date="2005" name="Nucleic Acids Res.">
        <title>Genome dynamics and diversity of Shigella species, the etiologic agents of bacillary dysentery.</title>
        <authorList>
            <person name="Yang F."/>
            <person name="Yang J."/>
            <person name="Zhang X."/>
            <person name="Chen L."/>
            <person name="Jiang Y."/>
            <person name="Yan Y."/>
            <person name="Tang X."/>
            <person name="Wang J."/>
            <person name="Xiong Z."/>
            <person name="Dong J."/>
            <person name="Xue Y."/>
            <person name="Zhu Y."/>
            <person name="Xu X."/>
            <person name="Sun L."/>
            <person name="Chen S."/>
            <person name="Nie H."/>
            <person name="Peng J."/>
            <person name="Xu J."/>
            <person name="Wang Y."/>
            <person name="Yuan Z."/>
            <person name="Wen Y."/>
            <person name="Yao Z."/>
            <person name="Shen Y."/>
            <person name="Qiang B."/>
            <person name="Hou Y."/>
            <person name="Yu J."/>
            <person name="Jin Q."/>
        </authorList>
    </citation>
    <scope>NUCLEOTIDE SEQUENCE [LARGE SCALE GENOMIC DNA]</scope>
    <source>
        <strain>Sb227</strain>
    </source>
</reference>
<gene>
    <name type="primary">folM</name>
    <name type="ordered locus">SBO_1530</name>
</gene>
<keyword id="KW-0521">NADP</keyword>
<keyword id="KW-0554">One-carbon metabolism</keyword>
<keyword id="KW-0560">Oxidoreductase</keyword>
<accession>Q320W2</accession>
<name>FOLM_SHIBS</name>
<sequence>MGKAQPLPILITGGGRRIGLALAWHFINQKQPVIVSYRTHYPAIDGLIKAGAQCIQADFSTNDGVMAFADEVLKSTHGLRAILHNASAWMAEKLGAPLADVLACMMQIHVNTPYLLNHALERLLRGHGHAASDIIHFTDYVVERGSDKHIAYAASKAALDNMTRSFARKLAPEVKVNSIAPSLILFNEHDDAEYRQQALNKSLMKTAPGEKEVIDLVDYLLTSCFVTGRSFPLDGGRHLR</sequence>
<dbReference type="EC" id="1.5.1.50" evidence="1"/>
<dbReference type="EC" id="1.5.1.3" evidence="1"/>
<dbReference type="EMBL" id="CP000036">
    <property type="protein sequence ID" value="ABB66146.1"/>
    <property type="molecule type" value="Genomic_DNA"/>
</dbReference>
<dbReference type="RefSeq" id="WP_000513665.1">
    <property type="nucleotide sequence ID" value="NC_007613.1"/>
</dbReference>
<dbReference type="SMR" id="Q320W2"/>
<dbReference type="KEGG" id="sbo:SBO_1530"/>
<dbReference type="HOGENOM" id="CLU_010194_1_3_6"/>
<dbReference type="Proteomes" id="UP000007067">
    <property type="component" value="Chromosome"/>
</dbReference>
<dbReference type="GO" id="GO:0004146">
    <property type="term" value="F:dihydrofolate reductase activity"/>
    <property type="evidence" value="ECO:0007669"/>
    <property type="project" value="UniProtKB-EC"/>
</dbReference>
<dbReference type="GO" id="GO:0006730">
    <property type="term" value="P:one-carbon metabolic process"/>
    <property type="evidence" value="ECO:0007669"/>
    <property type="project" value="UniProtKB-KW"/>
</dbReference>
<dbReference type="CDD" id="cd05357">
    <property type="entry name" value="PR_SDR_c"/>
    <property type="match status" value="1"/>
</dbReference>
<dbReference type="FunFam" id="3.40.50.720:FF:000225">
    <property type="entry name" value="Dihydrofolate reductase FolM"/>
    <property type="match status" value="1"/>
</dbReference>
<dbReference type="Gene3D" id="3.40.50.720">
    <property type="entry name" value="NAD(P)-binding Rossmann-like Domain"/>
    <property type="match status" value="1"/>
</dbReference>
<dbReference type="InterPro" id="IPR036291">
    <property type="entry name" value="NAD(P)-bd_dom_sf"/>
</dbReference>
<dbReference type="InterPro" id="IPR020904">
    <property type="entry name" value="Sc_DH/Rdtase_CS"/>
</dbReference>
<dbReference type="InterPro" id="IPR002347">
    <property type="entry name" value="SDR_fam"/>
</dbReference>
<dbReference type="NCBIfam" id="NF005066">
    <property type="entry name" value="PRK06483.1"/>
    <property type="match status" value="1"/>
</dbReference>
<dbReference type="PANTHER" id="PTHR43639:SF6">
    <property type="entry name" value="DIHYDROMONAPTERIN REDUCTASE"/>
    <property type="match status" value="1"/>
</dbReference>
<dbReference type="PANTHER" id="PTHR43639">
    <property type="entry name" value="OXIDOREDUCTASE, SHORT-CHAIN DEHYDROGENASE/REDUCTASE FAMILY (AFU_ORTHOLOGUE AFUA_5G02870)"/>
    <property type="match status" value="1"/>
</dbReference>
<dbReference type="Pfam" id="PF13561">
    <property type="entry name" value="adh_short_C2"/>
    <property type="match status" value="1"/>
</dbReference>
<dbReference type="PRINTS" id="PR00081">
    <property type="entry name" value="GDHRDH"/>
</dbReference>
<dbReference type="SUPFAM" id="SSF51735">
    <property type="entry name" value="NAD(P)-binding Rossmann-fold domains"/>
    <property type="match status" value="1"/>
</dbReference>
<dbReference type="PROSITE" id="PS00061">
    <property type="entry name" value="ADH_SHORT"/>
    <property type="match status" value="1"/>
</dbReference>
<feature type="chain" id="PRO_0000339399" description="Dihydromonapterin reductase">
    <location>
        <begin position="1"/>
        <end position="240"/>
    </location>
</feature>
<feature type="active site" description="Proton acceptor" evidence="2">
    <location>
        <position position="152"/>
    </location>
</feature>
<evidence type="ECO:0000250" key="1">
    <source>
        <dbReference type="UniProtKB" id="P0AFS3"/>
    </source>
</evidence>
<evidence type="ECO:0000255" key="2">
    <source>
        <dbReference type="PROSITE-ProRule" id="PRU10001"/>
    </source>
</evidence>
<evidence type="ECO:0000305" key="3"/>